<feature type="chain" id="PRO_0000193683" description="Chitin synthase 1">
    <location>
        <begin position="1" status="less than"/>
        <end position="189" status="greater than"/>
    </location>
</feature>
<feature type="non-terminal residue">
    <location>
        <position position="1"/>
    </location>
</feature>
<feature type="non-terminal residue">
    <location>
        <position position="189"/>
    </location>
</feature>
<reference key="1">
    <citation type="journal article" date="1992" name="Proc. Natl. Acad. Sci. U.S.A.">
        <title>Classification of fungal chitin synthases.</title>
        <authorList>
            <person name="Bowen A.R."/>
            <person name="Chen-Wu J.L.-P."/>
            <person name="Momany M."/>
            <person name="Young R."/>
            <person name="Szaniszlo P.J."/>
            <person name="Robbins P.W."/>
        </authorList>
    </citation>
    <scope>NUCLEOTIDE SEQUENCE [GENOMIC DNA]</scope>
</reference>
<keyword id="KW-1003">Cell membrane</keyword>
<keyword id="KW-0961">Cell wall biogenesis/degradation</keyword>
<keyword id="KW-0328">Glycosyltransferase</keyword>
<keyword id="KW-0472">Membrane</keyword>
<keyword id="KW-0808">Transferase</keyword>
<keyword id="KW-0812">Transmembrane</keyword>
<comment type="function">
    <text evidence="1">Polymerizes chitin, a structural polymer of the cell wall and septum, by transferring the sugar moiety of UDP-GlcNAc to the non-reducing end of the growing chitin polymer.</text>
</comment>
<comment type="catalytic activity">
    <reaction>
        <text>[(1-&gt;4)-N-acetyl-beta-D-glucosaminyl](n) + UDP-N-acetyl-alpha-D-glucosamine = [(1-&gt;4)-N-acetyl-beta-D-glucosaminyl](n+1) + UDP + H(+)</text>
        <dbReference type="Rhea" id="RHEA:16637"/>
        <dbReference type="Rhea" id="RHEA-COMP:9593"/>
        <dbReference type="Rhea" id="RHEA-COMP:9595"/>
        <dbReference type="ChEBI" id="CHEBI:15378"/>
        <dbReference type="ChEBI" id="CHEBI:17029"/>
        <dbReference type="ChEBI" id="CHEBI:57705"/>
        <dbReference type="ChEBI" id="CHEBI:58223"/>
        <dbReference type="EC" id="2.4.1.16"/>
    </reaction>
</comment>
<comment type="subcellular location">
    <subcellularLocation>
        <location evidence="1">Cell membrane</location>
        <topology evidence="1">Multi-pass membrane protein</topology>
    </subcellularLocation>
</comment>
<comment type="similarity">
    <text evidence="1">Belongs to the chitin synthase family. Class I subfamily.</text>
</comment>
<dbReference type="EC" id="2.4.1.16"/>
<dbReference type="EMBL" id="M82940">
    <property type="protein sequence ID" value="AAA33304.1"/>
    <property type="status" value="ALT_SEQ"/>
    <property type="molecule type" value="Genomic_DNA"/>
</dbReference>
<dbReference type="PIR" id="H38192">
    <property type="entry name" value="H38192"/>
</dbReference>
<dbReference type="CAZy" id="GT2">
    <property type="family name" value="Glycosyltransferase Family 2"/>
</dbReference>
<dbReference type="PaxDb" id="5061-CADANGAP00005714"/>
<dbReference type="VEuPathDB" id="FungiDB:An07g05570"/>
<dbReference type="VEuPathDB" id="FungiDB:ASPNIDRAFT2_1105099"/>
<dbReference type="VEuPathDB" id="FungiDB:ATCC64974_47120"/>
<dbReference type="VEuPathDB" id="FungiDB:M747DRAFT_338268"/>
<dbReference type="eggNOG" id="KOG2571">
    <property type="taxonomic scope" value="Eukaryota"/>
</dbReference>
<dbReference type="GO" id="GO:0030428">
    <property type="term" value="C:cell septum"/>
    <property type="evidence" value="ECO:0007669"/>
    <property type="project" value="TreeGrafter"/>
</dbReference>
<dbReference type="GO" id="GO:0005886">
    <property type="term" value="C:plasma membrane"/>
    <property type="evidence" value="ECO:0007669"/>
    <property type="project" value="UniProtKB-SubCell"/>
</dbReference>
<dbReference type="GO" id="GO:0004100">
    <property type="term" value="F:chitin synthase activity"/>
    <property type="evidence" value="ECO:0007669"/>
    <property type="project" value="UniProtKB-EC"/>
</dbReference>
<dbReference type="GO" id="GO:0071555">
    <property type="term" value="P:cell wall organization"/>
    <property type="evidence" value="ECO:0007669"/>
    <property type="project" value="UniProtKB-KW"/>
</dbReference>
<dbReference type="GO" id="GO:0006031">
    <property type="term" value="P:chitin biosynthetic process"/>
    <property type="evidence" value="ECO:0007669"/>
    <property type="project" value="InterPro"/>
</dbReference>
<dbReference type="InterPro" id="IPR004835">
    <property type="entry name" value="Chitin_synth"/>
</dbReference>
<dbReference type="InterPro" id="IPR004834">
    <property type="entry name" value="Chitin_synth_fun"/>
</dbReference>
<dbReference type="PANTHER" id="PTHR22914">
    <property type="entry name" value="CHITIN SYNTHASE"/>
    <property type="match status" value="1"/>
</dbReference>
<dbReference type="PANTHER" id="PTHR22914:SF9">
    <property type="entry name" value="CHITIN SYNTHASE 1"/>
    <property type="match status" value="1"/>
</dbReference>
<dbReference type="Pfam" id="PF01644">
    <property type="entry name" value="Chitin_synth_1"/>
    <property type="match status" value="1"/>
</dbReference>
<organism>
    <name type="scientific">Aspergillus niger</name>
    <dbReference type="NCBI Taxonomy" id="5061"/>
    <lineage>
        <taxon>Eukaryota</taxon>
        <taxon>Fungi</taxon>
        <taxon>Dikarya</taxon>
        <taxon>Ascomycota</taxon>
        <taxon>Pezizomycotina</taxon>
        <taxon>Eurotiomycetes</taxon>
        <taxon>Eurotiomycetidae</taxon>
        <taxon>Eurotiales</taxon>
        <taxon>Aspergillaceae</taxon>
        <taxon>Aspergillus</taxon>
        <taxon>Aspergillus subgen. Circumdati</taxon>
    </lineage>
</organism>
<sequence length="189" mass="21065">DFLFARTMIGVFKNIEYMCSRTSSKTWGKDAWKKIVVCVISDGRAKINPRTRAVLAGLGCYQDGIAKQQVNGKDVTAHIYEYTTQVGLELKGGQVSLKPRTGCPVQMIFCLKEKNQKKINSHRWFFQAFGRVLDPNICVLLDAGTRXGKDSIYHLWKXFDVDPMCGGACGEIKVMXSHGKKLLNPLVAG</sequence>
<name>CHS1_ASPNG</name>
<gene>
    <name type="primary">chs1</name>
</gene>
<evidence type="ECO:0000305" key="1"/>
<protein>
    <recommendedName>
        <fullName>Chitin synthase 1</fullName>
        <ecNumber>2.4.1.16</ecNumber>
    </recommendedName>
    <alternativeName>
        <fullName>Chitin-UDP acetyl-glucosaminyl transferase 1</fullName>
    </alternativeName>
    <alternativeName>
        <fullName>Class-I chitin synthase 1</fullName>
    </alternativeName>
</protein>
<accession>P30581</accession>
<proteinExistence type="inferred from homology"/>